<keyword id="KW-0007">Acetylation</keyword>
<keyword id="KW-0274">FAD</keyword>
<keyword id="KW-0285">Flavoprotein</keyword>
<keyword id="KW-0496">Mitochondrion</keyword>
<keyword id="KW-0560">Oxidoreductase</keyword>
<keyword id="KW-1185">Reference proteome</keyword>
<keyword id="KW-0809">Transit peptide</keyword>
<evidence type="ECO:0000250" key="1"/>
<evidence type="ECO:0000250" key="2">
    <source>
        <dbReference type="UniProtKB" id="Q60759"/>
    </source>
</evidence>
<evidence type="ECO:0000255" key="3"/>
<evidence type="ECO:0000305" key="4"/>
<gene>
    <name type="primary">GCDH</name>
    <name type="ORF">QccE-20069</name>
</gene>
<comment type="function">
    <text evidence="1">Catalyzes the oxidative decarboxylation of glutaryl-CoA to crotonyl-CoA and CO(2) in the degradative pathway of L-lysine, L-hydroxylysine, and L-tryptophan metabolism. It uses electron transfer flavoprotein as its electron acceptor (By similarity).</text>
</comment>
<comment type="catalytic activity">
    <reaction>
        <text>glutaryl-CoA + oxidized [electron-transfer flavoprotein] + 2 H(+) = (2E)-butenoyl-CoA + reduced [electron-transfer flavoprotein] + CO2</text>
        <dbReference type="Rhea" id="RHEA:13389"/>
        <dbReference type="Rhea" id="RHEA-COMP:10685"/>
        <dbReference type="Rhea" id="RHEA-COMP:10686"/>
        <dbReference type="ChEBI" id="CHEBI:15378"/>
        <dbReference type="ChEBI" id="CHEBI:16526"/>
        <dbReference type="ChEBI" id="CHEBI:57332"/>
        <dbReference type="ChEBI" id="CHEBI:57378"/>
        <dbReference type="ChEBI" id="CHEBI:57692"/>
        <dbReference type="ChEBI" id="CHEBI:58307"/>
        <dbReference type="EC" id="1.3.8.6"/>
    </reaction>
</comment>
<comment type="cofactor">
    <cofactor evidence="1">
        <name>FAD</name>
        <dbReference type="ChEBI" id="CHEBI:57692"/>
    </cofactor>
</comment>
<comment type="pathway">
    <text>Amino-acid metabolism; lysine degradation.</text>
</comment>
<comment type="pathway">
    <text>Amino-acid metabolism; tryptophan metabolism.</text>
</comment>
<comment type="subunit">
    <text evidence="1">Homotetramer.</text>
</comment>
<comment type="subcellular location">
    <subcellularLocation>
        <location>Mitochondrion matrix</location>
    </subcellularLocation>
</comment>
<comment type="similarity">
    <text evidence="4">Belongs to the acyl-CoA dehydrogenase family.</text>
</comment>
<accession>Q8HXX8</accession>
<name>GCDH_MACFA</name>
<reference key="1">
    <citation type="submission" date="2002-04" db="EMBL/GenBank/DDBJ databases">
        <title>Isolation and characterization of cDNA for macaque neurological disease genes.</title>
        <authorList>
            <person name="Kusuda J."/>
            <person name="Osada N."/>
            <person name="Hida M."/>
            <person name="Sugano S."/>
            <person name="Hashimoto K."/>
        </authorList>
    </citation>
    <scope>NUCLEOTIDE SEQUENCE [LARGE SCALE MRNA]</scope>
    <source>
        <tissue>Brain cortex</tissue>
    </source>
</reference>
<dbReference type="EC" id="1.3.8.6"/>
<dbReference type="EMBL" id="AB083311">
    <property type="protein sequence ID" value="BAC20590.1"/>
    <property type="molecule type" value="mRNA"/>
</dbReference>
<dbReference type="RefSeq" id="NP_001271544.1">
    <property type="nucleotide sequence ID" value="NM_001284615.1"/>
</dbReference>
<dbReference type="SMR" id="Q8HXX8"/>
<dbReference type="STRING" id="9541.ENSMFAP00000034538"/>
<dbReference type="eggNOG" id="KOG0138">
    <property type="taxonomic scope" value="Eukaryota"/>
</dbReference>
<dbReference type="UniPathway" id="UPA00224"/>
<dbReference type="UniPathway" id="UPA00225"/>
<dbReference type="Proteomes" id="UP000233100">
    <property type="component" value="Unplaced"/>
</dbReference>
<dbReference type="GO" id="GO:0005743">
    <property type="term" value="C:mitochondrial inner membrane"/>
    <property type="evidence" value="ECO:0007669"/>
    <property type="project" value="TreeGrafter"/>
</dbReference>
<dbReference type="GO" id="GO:0005759">
    <property type="term" value="C:mitochondrial matrix"/>
    <property type="evidence" value="ECO:0007669"/>
    <property type="project" value="UniProtKB-SubCell"/>
</dbReference>
<dbReference type="GO" id="GO:0000062">
    <property type="term" value="F:fatty-acyl-CoA binding"/>
    <property type="evidence" value="ECO:0007669"/>
    <property type="project" value="TreeGrafter"/>
</dbReference>
<dbReference type="GO" id="GO:0050660">
    <property type="term" value="F:flavin adenine dinucleotide binding"/>
    <property type="evidence" value="ECO:0007669"/>
    <property type="project" value="InterPro"/>
</dbReference>
<dbReference type="GO" id="GO:0004361">
    <property type="term" value="F:glutaryl-CoA dehydrogenase activity"/>
    <property type="evidence" value="ECO:0007669"/>
    <property type="project" value="UniProtKB-EC"/>
</dbReference>
<dbReference type="GO" id="GO:0033539">
    <property type="term" value="P:fatty acid beta-oxidation using acyl-CoA dehydrogenase"/>
    <property type="evidence" value="ECO:0000250"/>
    <property type="project" value="UniProtKB"/>
</dbReference>
<dbReference type="GO" id="GO:0046949">
    <property type="term" value="P:fatty-acyl-CoA biosynthetic process"/>
    <property type="evidence" value="ECO:0007669"/>
    <property type="project" value="TreeGrafter"/>
</dbReference>
<dbReference type="GO" id="GO:0006568">
    <property type="term" value="P:L-tryptophan metabolic process"/>
    <property type="evidence" value="ECO:0007669"/>
    <property type="project" value="UniProtKB-UniPathway"/>
</dbReference>
<dbReference type="CDD" id="cd01151">
    <property type="entry name" value="GCD"/>
    <property type="match status" value="1"/>
</dbReference>
<dbReference type="FunFam" id="1.20.140.10:FF:000006">
    <property type="entry name" value="Glutaryl-CoA dehydrogenase, mitochondrial"/>
    <property type="match status" value="1"/>
</dbReference>
<dbReference type="FunFam" id="2.40.110.10:FF:000008">
    <property type="entry name" value="Glutaryl-CoA dehydrogenase, mitochondrial"/>
    <property type="match status" value="1"/>
</dbReference>
<dbReference type="FunFam" id="1.10.540.10:FF:000003">
    <property type="entry name" value="glutaryl-CoA dehydrogenase, mitochondrial"/>
    <property type="match status" value="1"/>
</dbReference>
<dbReference type="Gene3D" id="1.10.540.10">
    <property type="entry name" value="Acyl-CoA dehydrogenase/oxidase, N-terminal domain"/>
    <property type="match status" value="1"/>
</dbReference>
<dbReference type="Gene3D" id="2.40.110.10">
    <property type="entry name" value="Butyryl-CoA Dehydrogenase, subunit A, domain 2"/>
    <property type="match status" value="1"/>
</dbReference>
<dbReference type="Gene3D" id="1.20.140.10">
    <property type="entry name" value="Butyryl-CoA Dehydrogenase, subunit A, domain 3"/>
    <property type="match status" value="1"/>
</dbReference>
<dbReference type="InterPro" id="IPR006089">
    <property type="entry name" value="Acyl-CoA_DH_CS"/>
</dbReference>
<dbReference type="InterPro" id="IPR006091">
    <property type="entry name" value="Acyl-CoA_Oxase/DH_mid-dom"/>
</dbReference>
<dbReference type="InterPro" id="IPR046373">
    <property type="entry name" value="Acyl-CoA_Oxase/DH_mid-dom_sf"/>
</dbReference>
<dbReference type="InterPro" id="IPR036250">
    <property type="entry name" value="AcylCo_DH-like_C"/>
</dbReference>
<dbReference type="InterPro" id="IPR009075">
    <property type="entry name" value="AcylCo_DH/oxidase_C"/>
</dbReference>
<dbReference type="InterPro" id="IPR013786">
    <property type="entry name" value="AcylCoA_DH/ox_N"/>
</dbReference>
<dbReference type="InterPro" id="IPR037069">
    <property type="entry name" value="AcylCoA_DH/ox_N_sf"/>
</dbReference>
<dbReference type="InterPro" id="IPR009100">
    <property type="entry name" value="AcylCoA_DH/oxidase_NM_dom_sf"/>
</dbReference>
<dbReference type="InterPro" id="IPR052033">
    <property type="entry name" value="Glutaryl-CoA_DH_mitochondrial"/>
</dbReference>
<dbReference type="PANTHER" id="PTHR42807">
    <property type="entry name" value="GLUTARYL-COA DEHYDROGENASE, MITOCHONDRIAL"/>
    <property type="match status" value="1"/>
</dbReference>
<dbReference type="PANTHER" id="PTHR42807:SF1">
    <property type="entry name" value="GLUTARYL-COA DEHYDROGENASE, MITOCHONDRIAL"/>
    <property type="match status" value="1"/>
</dbReference>
<dbReference type="Pfam" id="PF00441">
    <property type="entry name" value="Acyl-CoA_dh_1"/>
    <property type="match status" value="1"/>
</dbReference>
<dbReference type="Pfam" id="PF02770">
    <property type="entry name" value="Acyl-CoA_dh_M"/>
    <property type="match status" value="1"/>
</dbReference>
<dbReference type="Pfam" id="PF02771">
    <property type="entry name" value="Acyl-CoA_dh_N"/>
    <property type="match status" value="1"/>
</dbReference>
<dbReference type="SUPFAM" id="SSF47203">
    <property type="entry name" value="Acyl-CoA dehydrogenase C-terminal domain-like"/>
    <property type="match status" value="1"/>
</dbReference>
<dbReference type="SUPFAM" id="SSF56645">
    <property type="entry name" value="Acyl-CoA dehydrogenase NM domain-like"/>
    <property type="match status" value="1"/>
</dbReference>
<dbReference type="PROSITE" id="PS00072">
    <property type="entry name" value="ACYL_COA_DH_1"/>
    <property type="match status" value="1"/>
</dbReference>
<dbReference type="PROSITE" id="PS00073">
    <property type="entry name" value="ACYL_COA_DH_2"/>
    <property type="match status" value="1"/>
</dbReference>
<feature type="transit peptide" description="Mitochondrion" evidence="3">
    <location>
        <begin position="1"/>
        <end position="44"/>
    </location>
</feature>
<feature type="chain" id="PRO_0000000527" description="Glutaryl-CoA dehydrogenase, mitochondrial">
    <location>
        <begin position="45"/>
        <end position="438"/>
    </location>
</feature>
<feature type="active site" description="Proton acceptor" evidence="1">
    <location>
        <position position="414"/>
    </location>
</feature>
<feature type="binding site" evidence="1">
    <location>
        <begin position="138"/>
        <end position="139"/>
    </location>
    <ligand>
        <name>substrate</name>
    </ligand>
</feature>
<feature type="binding site" evidence="1">
    <location>
        <begin position="177"/>
        <end position="186"/>
    </location>
    <ligand>
        <name>FAD</name>
        <dbReference type="ChEBI" id="CHEBI:57692"/>
    </ligand>
</feature>
<feature type="binding site" evidence="1">
    <location>
        <position position="186"/>
    </location>
    <ligand>
        <name>FAD</name>
        <dbReference type="ChEBI" id="CHEBI:57692"/>
    </ligand>
</feature>
<feature type="binding site" evidence="1">
    <location>
        <position position="186"/>
    </location>
    <ligand>
        <name>substrate</name>
    </ligand>
</feature>
<feature type="binding site" evidence="1">
    <location>
        <begin position="212"/>
        <end position="214"/>
    </location>
    <ligand>
        <name>FAD</name>
        <dbReference type="ChEBI" id="CHEBI:57692"/>
    </ligand>
</feature>
<feature type="binding site" evidence="1">
    <location>
        <begin position="287"/>
        <end position="294"/>
    </location>
    <ligand>
        <name>substrate</name>
    </ligand>
</feature>
<feature type="binding site" evidence="1">
    <location>
        <position position="319"/>
    </location>
    <ligand>
        <name>FAD</name>
        <dbReference type="ChEBI" id="CHEBI:57692"/>
    </ligand>
</feature>
<feature type="binding site" evidence="1">
    <location>
        <position position="330"/>
    </location>
    <ligand>
        <name>FAD</name>
        <dbReference type="ChEBI" id="CHEBI:57692"/>
    </ligand>
</feature>
<feature type="binding site" evidence="1">
    <location>
        <begin position="387"/>
        <end position="391"/>
    </location>
    <ligand>
        <name>FAD</name>
        <dbReference type="ChEBI" id="CHEBI:57692"/>
    </ligand>
</feature>
<feature type="binding site" evidence="1">
    <location>
        <position position="415"/>
    </location>
    <ligand>
        <name>substrate</name>
    </ligand>
</feature>
<feature type="binding site" evidence="1">
    <location>
        <begin position="416"/>
        <end position="418"/>
    </location>
    <ligand>
        <name>FAD</name>
        <dbReference type="ChEBI" id="CHEBI:57692"/>
    </ligand>
</feature>
<feature type="binding site" evidence="1">
    <location>
        <position position="416"/>
    </location>
    <ligand>
        <name>FAD</name>
        <dbReference type="ChEBI" id="CHEBI:57692"/>
    </ligand>
</feature>
<feature type="binding site" evidence="1">
    <location>
        <position position="434"/>
    </location>
    <ligand>
        <name>FAD</name>
        <dbReference type="ChEBI" id="CHEBI:57692"/>
    </ligand>
</feature>
<feature type="modified residue" description="N6-acetyllysine" evidence="2">
    <location>
        <position position="240"/>
    </location>
</feature>
<organism>
    <name type="scientific">Macaca fascicularis</name>
    <name type="common">Crab-eating macaque</name>
    <name type="synonym">Cynomolgus monkey</name>
    <dbReference type="NCBI Taxonomy" id="9541"/>
    <lineage>
        <taxon>Eukaryota</taxon>
        <taxon>Metazoa</taxon>
        <taxon>Chordata</taxon>
        <taxon>Craniata</taxon>
        <taxon>Vertebrata</taxon>
        <taxon>Euteleostomi</taxon>
        <taxon>Mammalia</taxon>
        <taxon>Eutheria</taxon>
        <taxon>Euarchontoglires</taxon>
        <taxon>Primates</taxon>
        <taxon>Haplorrhini</taxon>
        <taxon>Catarrhini</taxon>
        <taxon>Cercopithecidae</taxon>
        <taxon>Cercopithecinae</taxon>
        <taxon>Macaca</taxon>
    </lineage>
</organism>
<protein>
    <recommendedName>
        <fullName>Glutaryl-CoA dehydrogenase, mitochondrial</fullName>
        <shortName>GCD</shortName>
        <ecNumber>1.3.8.6</ecNumber>
    </recommendedName>
</protein>
<proteinExistence type="evidence at transcript level"/>
<sequence>MALRGVSVQLLSRVPGLRVFRTWVSSAAQTEKVGRTQSQLAKSSRPEFDWRDPLVLEEQLTTDEILIRDTFRTYCQERLMPRILLANRNEVFHREIISQMGELGVLGPTIKGYGCAGVSSVAYGLLARELERVDSGYRSAMSVQSPLVMHPIYAYGSEEQRQKYLPRLAKGELLGCFGLTEPNSGSDPSSMETRARYNSSNKSYTLNGTKTWITNSPMADLFVVWARCEDGRIRGFLLEKGMRGLSAPRIQGKFSLRASATGMIIMDGVEVPEENMLPGASSLGGSFGCLNNGRYGIAWGVLGASEFCLHTARQYALDRMQFGVPLARNQLIQKKLADMLTEITLGLHACLQLGRLKDQDKAAPEMVSLLKRNNCGKALDIARQARDMLGGNGISDEYHVIRHAMNLEAVNTYEGTHDIHALILGRAITGIQAFTASK</sequence>